<evidence type="ECO:0000255" key="1"/>
<evidence type="ECO:0000269" key="2">
    <source>
    </source>
</evidence>
<evidence type="ECO:0000305" key="3"/>
<feature type="chain" id="PRO_0000247434" description="Protein TEX261">
    <location>
        <begin position="1"/>
        <end position="196"/>
    </location>
</feature>
<feature type="transmembrane region" description="Helical" evidence="1">
    <location>
        <begin position="3"/>
        <end position="23"/>
    </location>
</feature>
<feature type="transmembrane region" description="Helical" evidence="1">
    <location>
        <begin position="42"/>
        <end position="62"/>
    </location>
</feature>
<feature type="transmembrane region" description="Helical" evidence="1">
    <location>
        <begin position="70"/>
        <end position="90"/>
    </location>
</feature>
<feature type="transmembrane region" description="Helical" evidence="1">
    <location>
        <begin position="97"/>
        <end position="117"/>
    </location>
</feature>
<feature type="transmembrane region" description="Helical" evidence="1">
    <location>
        <begin position="125"/>
        <end position="145"/>
    </location>
</feature>
<reference key="1">
    <citation type="journal article" date="1996" name="Mamm. Genome">
        <title>Characterization of genes expressed early in mouse spermatogenesis, isolated from a subtractive cDNA library.</title>
        <authorList>
            <person name="Lopez-Fernandez L.A."/>
            <person name="del Mazo J."/>
        </authorList>
    </citation>
    <scope>NUCLEOTIDE SEQUENCE [MRNA]</scope>
    <scope>TISSUE SPECIFICITY</scope>
    <source>
        <strain>SWR/J</strain>
        <tissue>Testis</tissue>
    </source>
</reference>
<reference key="2">
    <citation type="journal article" date="2005" name="Science">
        <title>The transcriptional landscape of the mammalian genome.</title>
        <authorList>
            <person name="Carninci P."/>
            <person name="Kasukawa T."/>
            <person name="Katayama S."/>
            <person name="Gough J."/>
            <person name="Frith M.C."/>
            <person name="Maeda N."/>
            <person name="Oyama R."/>
            <person name="Ravasi T."/>
            <person name="Lenhard B."/>
            <person name="Wells C."/>
            <person name="Kodzius R."/>
            <person name="Shimokawa K."/>
            <person name="Bajic V.B."/>
            <person name="Brenner S.E."/>
            <person name="Batalov S."/>
            <person name="Forrest A.R."/>
            <person name="Zavolan M."/>
            <person name="Davis M.J."/>
            <person name="Wilming L.G."/>
            <person name="Aidinis V."/>
            <person name="Allen J.E."/>
            <person name="Ambesi-Impiombato A."/>
            <person name="Apweiler R."/>
            <person name="Aturaliya R.N."/>
            <person name="Bailey T.L."/>
            <person name="Bansal M."/>
            <person name="Baxter L."/>
            <person name="Beisel K.W."/>
            <person name="Bersano T."/>
            <person name="Bono H."/>
            <person name="Chalk A.M."/>
            <person name="Chiu K.P."/>
            <person name="Choudhary V."/>
            <person name="Christoffels A."/>
            <person name="Clutterbuck D.R."/>
            <person name="Crowe M.L."/>
            <person name="Dalla E."/>
            <person name="Dalrymple B.P."/>
            <person name="de Bono B."/>
            <person name="Della Gatta G."/>
            <person name="di Bernardo D."/>
            <person name="Down T."/>
            <person name="Engstrom P."/>
            <person name="Fagiolini M."/>
            <person name="Faulkner G."/>
            <person name="Fletcher C.F."/>
            <person name="Fukushima T."/>
            <person name="Furuno M."/>
            <person name="Futaki S."/>
            <person name="Gariboldi M."/>
            <person name="Georgii-Hemming P."/>
            <person name="Gingeras T.R."/>
            <person name="Gojobori T."/>
            <person name="Green R.E."/>
            <person name="Gustincich S."/>
            <person name="Harbers M."/>
            <person name="Hayashi Y."/>
            <person name="Hensch T.K."/>
            <person name="Hirokawa N."/>
            <person name="Hill D."/>
            <person name="Huminiecki L."/>
            <person name="Iacono M."/>
            <person name="Ikeo K."/>
            <person name="Iwama A."/>
            <person name="Ishikawa T."/>
            <person name="Jakt M."/>
            <person name="Kanapin A."/>
            <person name="Katoh M."/>
            <person name="Kawasawa Y."/>
            <person name="Kelso J."/>
            <person name="Kitamura H."/>
            <person name="Kitano H."/>
            <person name="Kollias G."/>
            <person name="Krishnan S.P."/>
            <person name="Kruger A."/>
            <person name="Kummerfeld S.K."/>
            <person name="Kurochkin I.V."/>
            <person name="Lareau L.F."/>
            <person name="Lazarevic D."/>
            <person name="Lipovich L."/>
            <person name="Liu J."/>
            <person name="Liuni S."/>
            <person name="McWilliam S."/>
            <person name="Madan Babu M."/>
            <person name="Madera M."/>
            <person name="Marchionni L."/>
            <person name="Matsuda H."/>
            <person name="Matsuzawa S."/>
            <person name="Miki H."/>
            <person name="Mignone F."/>
            <person name="Miyake S."/>
            <person name="Morris K."/>
            <person name="Mottagui-Tabar S."/>
            <person name="Mulder N."/>
            <person name="Nakano N."/>
            <person name="Nakauchi H."/>
            <person name="Ng P."/>
            <person name="Nilsson R."/>
            <person name="Nishiguchi S."/>
            <person name="Nishikawa S."/>
            <person name="Nori F."/>
            <person name="Ohara O."/>
            <person name="Okazaki Y."/>
            <person name="Orlando V."/>
            <person name="Pang K.C."/>
            <person name="Pavan W.J."/>
            <person name="Pavesi G."/>
            <person name="Pesole G."/>
            <person name="Petrovsky N."/>
            <person name="Piazza S."/>
            <person name="Reed J."/>
            <person name="Reid J.F."/>
            <person name="Ring B.Z."/>
            <person name="Ringwald M."/>
            <person name="Rost B."/>
            <person name="Ruan Y."/>
            <person name="Salzberg S.L."/>
            <person name="Sandelin A."/>
            <person name="Schneider C."/>
            <person name="Schoenbach C."/>
            <person name="Sekiguchi K."/>
            <person name="Semple C.A."/>
            <person name="Seno S."/>
            <person name="Sessa L."/>
            <person name="Sheng Y."/>
            <person name="Shibata Y."/>
            <person name="Shimada H."/>
            <person name="Shimada K."/>
            <person name="Silva D."/>
            <person name="Sinclair B."/>
            <person name="Sperling S."/>
            <person name="Stupka E."/>
            <person name="Sugiura K."/>
            <person name="Sultana R."/>
            <person name="Takenaka Y."/>
            <person name="Taki K."/>
            <person name="Tammoja K."/>
            <person name="Tan S.L."/>
            <person name="Tang S."/>
            <person name="Taylor M.S."/>
            <person name="Tegner J."/>
            <person name="Teichmann S.A."/>
            <person name="Ueda H.R."/>
            <person name="van Nimwegen E."/>
            <person name="Verardo R."/>
            <person name="Wei C.L."/>
            <person name="Yagi K."/>
            <person name="Yamanishi H."/>
            <person name="Zabarovsky E."/>
            <person name="Zhu S."/>
            <person name="Zimmer A."/>
            <person name="Hide W."/>
            <person name="Bult C."/>
            <person name="Grimmond S.M."/>
            <person name="Teasdale R.D."/>
            <person name="Liu E.T."/>
            <person name="Brusic V."/>
            <person name="Quackenbush J."/>
            <person name="Wahlestedt C."/>
            <person name="Mattick J.S."/>
            <person name="Hume D.A."/>
            <person name="Kai C."/>
            <person name="Sasaki D."/>
            <person name="Tomaru Y."/>
            <person name="Fukuda S."/>
            <person name="Kanamori-Katayama M."/>
            <person name="Suzuki M."/>
            <person name="Aoki J."/>
            <person name="Arakawa T."/>
            <person name="Iida J."/>
            <person name="Imamura K."/>
            <person name="Itoh M."/>
            <person name="Kato T."/>
            <person name="Kawaji H."/>
            <person name="Kawagashira N."/>
            <person name="Kawashima T."/>
            <person name="Kojima M."/>
            <person name="Kondo S."/>
            <person name="Konno H."/>
            <person name="Nakano K."/>
            <person name="Ninomiya N."/>
            <person name="Nishio T."/>
            <person name="Okada M."/>
            <person name="Plessy C."/>
            <person name="Shibata K."/>
            <person name="Shiraki T."/>
            <person name="Suzuki S."/>
            <person name="Tagami M."/>
            <person name="Waki K."/>
            <person name="Watahiki A."/>
            <person name="Okamura-Oho Y."/>
            <person name="Suzuki H."/>
            <person name="Kawai J."/>
            <person name="Hayashizaki Y."/>
        </authorList>
    </citation>
    <scope>NUCLEOTIDE SEQUENCE [LARGE SCALE MRNA]</scope>
    <source>
        <strain>C57BL/6J</strain>
        <tissue>Bone marrow</tissue>
    </source>
</reference>
<reference key="3">
    <citation type="journal article" date="2004" name="Genome Res.">
        <title>The status, quality, and expansion of the NIH full-length cDNA project: the Mammalian Gene Collection (MGC).</title>
        <authorList>
            <consortium name="The MGC Project Team"/>
        </authorList>
    </citation>
    <scope>NUCLEOTIDE SEQUENCE [LARGE SCALE MRNA]</scope>
    <source>
        <strain>C57BL/6J</strain>
        <strain>FVB/N</strain>
        <tissue>Mammary tumor</tissue>
    </source>
</reference>
<reference key="4">
    <citation type="journal article" date="1998" name="Biochem. Biophys. Res. Commun.">
        <title>Tex261, a novel gene presumably related but distinct from steroidogenic acute regulatory (stAR) gene, is regulated during the development of germ cells.</title>
        <authorList>
            <person name="Lopez-Fernandez L.A."/>
            <person name="Parragao M."/>
            <person name="del Mazo J."/>
        </authorList>
    </citation>
    <scope>DEVELOPMENTAL REGULATION</scope>
</reference>
<protein>
    <recommendedName>
        <fullName>Protein TEX261</fullName>
    </recommendedName>
    <alternativeName>
        <fullName>Testis-expressed protein 261</fullName>
    </alternativeName>
</protein>
<comment type="subcellular location">
    <subcellularLocation>
        <location evidence="3">Membrane</location>
        <topology evidence="3">Multi-pass membrane protein</topology>
    </subcellularLocation>
</comment>
<comment type="tissue specificity">
    <text evidence="2">Detected in testis.</text>
</comment>
<comment type="developmental stage">
    <text>Not detectable in testis from 6 day old animals. Detectable in testis 15 days after birth. Highly expressed in testis 20 days after birth. Highly expressed in meiotic and post-meiotic germ cells.</text>
</comment>
<comment type="similarity">
    <text evidence="3">Belongs to the SVP26 family.</text>
</comment>
<accession>Q62302</accession>
<gene>
    <name type="primary">Tex261</name>
</gene>
<keyword id="KW-0472">Membrane</keyword>
<keyword id="KW-1185">Reference proteome</keyword>
<keyword id="KW-0812">Transmembrane</keyword>
<keyword id="KW-1133">Transmembrane helix</keyword>
<dbReference type="EMBL" id="X81058">
    <property type="protein sequence ID" value="CAA56947.1"/>
    <property type="molecule type" value="mRNA"/>
</dbReference>
<dbReference type="EMBL" id="AK149789">
    <property type="protein sequence ID" value="BAE29086.1"/>
    <property type="molecule type" value="mRNA"/>
</dbReference>
<dbReference type="EMBL" id="BC003802">
    <property type="protein sequence ID" value="AAH03802.1"/>
    <property type="molecule type" value="mRNA"/>
</dbReference>
<dbReference type="CCDS" id="CCDS20285.1"/>
<dbReference type="PIR" id="S47481">
    <property type="entry name" value="S47481"/>
</dbReference>
<dbReference type="RefSeq" id="NP_033383.1">
    <property type="nucleotide sequence ID" value="NM_009357.2"/>
</dbReference>
<dbReference type="FunCoup" id="Q62302">
    <property type="interactions" value="926"/>
</dbReference>
<dbReference type="STRING" id="10090.ENSMUSP00000014892"/>
<dbReference type="GlyGen" id="Q62302">
    <property type="glycosylation" value="1 site, 1 O-linked glycan (1 site)"/>
</dbReference>
<dbReference type="PhosphoSitePlus" id="Q62302"/>
<dbReference type="PaxDb" id="10090-ENSMUSP00000014892"/>
<dbReference type="ProteomicsDB" id="297758"/>
<dbReference type="DNASU" id="21766"/>
<dbReference type="Ensembl" id="ENSMUST00000014892.8">
    <property type="protein sequence ID" value="ENSMUSP00000014892.7"/>
    <property type="gene ID" value="ENSMUSG00000014748.14"/>
</dbReference>
<dbReference type="GeneID" id="21766"/>
<dbReference type="KEGG" id="mmu:21766"/>
<dbReference type="UCSC" id="uc009cof.2">
    <property type="organism name" value="mouse"/>
</dbReference>
<dbReference type="AGR" id="MGI:1096575"/>
<dbReference type="CTD" id="113419"/>
<dbReference type="MGI" id="MGI:1096575">
    <property type="gene designation" value="Tex261"/>
</dbReference>
<dbReference type="VEuPathDB" id="HostDB:ENSMUSG00000014748"/>
<dbReference type="eggNOG" id="KOG4136">
    <property type="taxonomic scope" value="Eukaryota"/>
</dbReference>
<dbReference type="GeneTree" id="ENSGT00390000010888"/>
<dbReference type="HOGENOM" id="CLU_058268_2_0_1"/>
<dbReference type="InParanoid" id="Q62302"/>
<dbReference type="OMA" id="TMGTEPV"/>
<dbReference type="OrthoDB" id="28257at2759"/>
<dbReference type="PhylomeDB" id="Q62302"/>
<dbReference type="TreeFam" id="TF324741"/>
<dbReference type="BioGRID-ORCS" id="21766">
    <property type="hits" value="3 hits in 76 CRISPR screens"/>
</dbReference>
<dbReference type="ChiTaRS" id="Tex261">
    <property type="organism name" value="mouse"/>
</dbReference>
<dbReference type="PRO" id="PR:Q62302"/>
<dbReference type="Proteomes" id="UP000000589">
    <property type="component" value="Chromosome 6"/>
</dbReference>
<dbReference type="RNAct" id="Q62302">
    <property type="molecule type" value="protein"/>
</dbReference>
<dbReference type="Bgee" id="ENSMUSG00000014748">
    <property type="expression patterns" value="Expressed in ileal epithelium and 261 other cell types or tissues"/>
</dbReference>
<dbReference type="GO" id="GO:0005737">
    <property type="term" value="C:cytoplasm"/>
    <property type="evidence" value="ECO:0007669"/>
    <property type="project" value="GOC"/>
</dbReference>
<dbReference type="GO" id="GO:0016020">
    <property type="term" value="C:membrane"/>
    <property type="evidence" value="ECO:0007669"/>
    <property type="project" value="UniProtKB-SubCell"/>
</dbReference>
<dbReference type="GO" id="GO:0097020">
    <property type="term" value="F:COPII receptor activity"/>
    <property type="evidence" value="ECO:0007669"/>
    <property type="project" value="InterPro"/>
</dbReference>
<dbReference type="GO" id="GO:0006888">
    <property type="term" value="P:endoplasmic reticulum to Golgi vesicle-mediated transport"/>
    <property type="evidence" value="ECO:0007669"/>
    <property type="project" value="InterPro"/>
</dbReference>
<dbReference type="GO" id="GO:0043065">
    <property type="term" value="P:positive regulation of apoptotic process"/>
    <property type="evidence" value="ECO:0000316"/>
    <property type="project" value="MGI"/>
</dbReference>
<dbReference type="InterPro" id="IPR007277">
    <property type="entry name" value="Svp26/Tex261"/>
</dbReference>
<dbReference type="PANTHER" id="PTHR13144:SF0">
    <property type="entry name" value="PROTEIN TEX261"/>
    <property type="match status" value="1"/>
</dbReference>
<dbReference type="PANTHER" id="PTHR13144">
    <property type="entry name" value="TEX261 PROTEIN"/>
    <property type="match status" value="1"/>
</dbReference>
<dbReference type="Pfam" id="PF04148">
    <property type="entry name" value="Erv26"/>
    <property type="match status" value="1"/>
</dbReference>
<name>TX261_MOUSE</name>
<proteinExistence type="evidence at transcript level"/>
<sequence>MWFMYVLSWLSLFIQVAFITLAVAAGLYYLAELIEEYTVATSRIIKYMIWFSTAVLIGLYVFERFPTSMIGVGLFTNLVYFGLLQTFPFIMLTSPNFILSCGLVVVNHYLAFQFFAEEYYPFSEVLAYFTFCLWIIPFAFFVSLSAGENVLPSTMQPGDDVVSNYFTKGKRGKRLGILVVFSFIKEAILPSRQKIY</sequence>
<organism>
    <name type="scientific">Mus musculus</name>
    <name type="common">Mouse</name>
    <dbReference type="NCBI Taxonomy" id="10090"/>
    <lineage>
        <taxon>Eukaryota</taxon>
        <taxon>Metazoa</taxon>
        <taxon>Chordata</taxon>
        <taxon>Craniata</taxon>
        <taxon>Vertebrata</taxon>
        <taxon>Euteleostomi</taxon>
        <taxon>Mammalia</taxon>
        <taxon>Eutheria</taxon>
        <taxon>Euarchontoglires</taxon>
        <taxon>Glires</taxon>
        <taxon>Rodentia</taxon>
        <taxon>Myomorpha</taxon>
        <taxon>Muroidea</taxon>
        <taxon>Muridae</taxon>
        <taxon>Murinae</taxon>
        <taxon>Mus</taxon>
        <taxon>Mus</taxon>
    </lineage>
</organism>